<dbReference type="EMBL" id="CP000416">
    <property type="protein sequence ID" value="ABJ64458.1"/>
    <property type="molecule type" value="Genomic_DNA"/>
</dbReference>
<dbReference type="RefSeq" id="WP_011668031.1">
    <property type="nucleotide sequence ID" value="NC_008497.1"/>
</dbReference>
<dbReference type="SMR" id="Q03QR4"/>
<dbReference type="STRING" id="387344.LVIS_1358"/>
<dbReference type="DNASU" id="4413088"/>
<dbReference type="KEGG" id="lbr:LVIS_1358"/>
<dbReference type="eggNOG" id="COG3763">
    <property type="taxonomic scope" value="Bacteria"/>
</dbReference>
<dbReference type="HOGENOM" id="CLU_180108_0_1_9"/>
<dbReference type="Proteomes" id="UP000001652">
    <property type="component" value="Chromosome"/>
</dbReference>
<dbReference type="GO" id="GO:0005886">
    <property type="term" value="C:plasma membrane"/>
    <property type="evidence" value="ECO:0007669"/>
    <property type="project" value="UniProtKB-SubCell"/>
</dbReference>
<dbReference type="HAMAP" id="MF_00363">
    <property type="entry name" value="UPF0154"/>
    <property type="match status" value="1"/>
</dbReference>
<dbReference type="InterPro" id="IPR005359">
    <property type="entry name" value="UPF0154"/>
</dbReference>
<dbReference type="Pfam" id="PF03672">
    <property type="entry name" value="UPF0154"/>
    <property type="match status" value="1"/>
</dbReference>
<protein>
    <recommendedName>
        <fullName evidence="1">UPF0154 protein LVIS_1358</fullName>
    </recommendedName>
</protein>
<proteinExistence type="inferred from homology"/>
<name>Y1358_LEVBA</name>
<feature type="chain" id="PRO_1000005627" description="UPF0154 protein LVIS_1358">
    <location>
        <begin position="1"/>
        <end position="74"/>
    </location>
</feature>
<feature type="transmembrane region" description="Helical" evidence="1">
    <location>
        <begin position="4"/>
        <end position="24"/>
    </location>
</feature>
<sequence>MATWIWILIVIVVGLACAAGGFYGARKYMENYLKDNPPINEDQLRAMMLQMGQKPSQRKLHQMMAAMQQNARKK</sequence>
<reference key="1">
    <citation type="journal article" date="2006" name="Proc. Natl. Acad. Sci. U.S.A.">
        <title>Comparative genomics of the lactic acid bacteria.</title>
        <authorList>
            <person name="Makarova K.S."/>
            <person name="Slesarev A."/>
            <person name="Wolf Y.I."/>
            <person name="Sorokin A."/>
            <person name="Mirkin B."/>
            <person name="Koonin E.V."/>
            <person name="Pavlov A."/>
            <person name="Pavlova N."/>
            <person name="Karamychev V."/>
            <person name="Polouchine N."/>
            <person name="Shakhova V."/>
            <person name="Grigoriev I."/>
            <person name="Lou Y."/>
            <person name="Rohksar D."/>
            <person name="Lucas S."/>
            <person name="Huang K."/>
            <person name="Goodstein D.M."/>
            <person name="Hawkins T."/>
            <person name="Plengvidhya V."/>
            <person name="Welker D."/>
            <person name="Hughes J."/>
            <person name="Goh Y."/>
            <person name="Benson A."/>
            <person name="Baldwin K."/>
            <person name="Lee J.-H."/>
            <person name="Diaz-Muniz I."/>
            <person name="Dosti B."/>
            <person name="Smeianov V."/>
            <person name="Wechter W."/>
            <person name="Barabote R."/>
            <person name="Lorca G."/>
            <person name="Altermann E."/>
            <person name="Barrangou R."/>
            <person name="Ganesan B."/>
            <person name="Xie Y."/>
            <person name="Rawsthorne H."/>
            <person name="Tamir D."/>
            <person name="Parker C."/>
            <person name="Breidt F."/>
            <person name="Broadbent J.R."/>
            <person name="Hutkins R."/>
            <person name="O'Sullivan D."/>
            <person name="Steele J."/>
            <person name="Unlu G."/>
            <person name="Saier M.H. Jr."/>
            <person name="Klaenhammer T."/>
            <person name="Richardson P."/>
            <person name="Kozyavkin S."/>
            <person name="Weimer B.C."/>
            <person name="Mills D.A."/>
        </authorList>
    </citation>
    <scope>NUCLEOTIDE SEQUENCE [LARGE SCALE GENOMIC DNA]</scope>
    <source>
        <strain>ATCC 367 / BCRC 12310 / CIP 105137 / JCM 1170 / LMG 11437 / NCIMB 947 / NCTC 947</strain>
    </source>
</reference>
<organism>
    <name type="scientific">Levilactobacillus brevis (strain ATCC 367 / BCRC 12310 / CIP 105137 / JCM 1170 / LMG 11437 / NCIMB 947 / NCTC 947)</name>
    <name type="common">Lactobacillus brevis</name>
    <dbReference type="NCBI Taxonomy" id="387344"/>
    <lineage>
        <taxon>Bacteria</taxon>
        <taxon>Bacillati</taxon>
        <taxon>Bacillota</taxon>
        <taxon>Bacilli</taxon>
        <taxon>Lactobacillales</taxon>
        <taxon>Lactobacillaceae</taxon>
        <taxon>Levilactobacillus</taxon>
    </lineage>
</organism>
<evidence type="ECO:0000255" key="1">
    <source>
        <dbReference type="HAMAP-Rule" id="MF_00363"/>
    </source>
</evidence>
<accession>Q03QR4</accession>
<keyword id="KW-1003">Cell membrane</keyword>
<keyword id="KW-0472">Membrane</keyword>
<keyword id="KW-1185">Reference proteome</keyword>
<keyword id="KW-0812">Transmembrane</keyword>
<keyword id="KW-1133">Transmembrane helix</keyword>
<comment type="subcellular location">
    <subcellularLocation>
        <location evidence="1">Cell membrane</location>
        <topology evidence="1">Single-pass membrane protein</topology>
    </subcellularLocation>
</comment>
<comment type="similarity">
    <text evidence="1">Belongs to the UPF0154 family.</text>
</comment>
<gene>
    <name type="ordered locus">LVIS_1358</name>
</gene>